<reference key="1">
    <citation type="journal article" date="2005" name="Genome Res.">
        <title>Genome sequence of Blochmannia pennsylvanicus indicates parallel evolutionary trends among bacterial mutualists of insects.</title>
        <authorList>
            <person name="Degnan P.H."/>
            <person name="Lazarus A.B."/>
            <person name="Wernegreen J.J."/>
        </authorList>
    </citation>
    <scope>NUCLEOTIDE SEQUENCE [LARGE SCALE GENOMIC DNA]</scope>
    <source>
        <strain>BPEN</strain>
    </source>
</reference>
<comment type="function">
    <text evidence="1">Catalyzes the last two sequential reactions in the de novo biosynthetic pathway for UDP-N-acetylglucosamine (UDP-GlcNAc). The C-terminal domain catalyzes the transfer of acetyl group from acetyl coenzyme A to glucosamine-1-phosphate (GlcN-1-P) to produce N-acetylglucosamine-1-phosphate (GlcNAc-1-P), which is converted into UDP-GlcNAc by the transfer of uridine 5-monophosphate (from uridine 5-triphosphate), a reaction catalyzed by the N-terminal domain.</text>
</comment>
<comment type="catalytic activity">
    <reaction evidence="1">
        <text>alpha-D-glucosamine 1-phosphate + acetyl-CoA = N-acetyl-alpha-D-glucosamine 1-phosphate + CoA + H(+)</text>
        <dbReference type="Rhea" id="RHEA:13725"/>
        <dbReference type="ChEBI" id="CHEBI:15378"/>
        <dbReference type="ChEBI" id="CHEBI:57287"/>
        <dbReference type="ChEBI" id="CHEBI:57288"/>
        <dbReference type="ChEBI" id="CHEBI:57776"/>
        <dbReference type="ChEBI" id="CHEBI:58516"/>
        <dbReference type="EC" id="2.3.1.157"/>
    </reaction>
</comment>
<comment type="catalytic activity">
    <reaction evidence="1">
        <text>N-acetyl-alpha-D-glucosamine 1-phosphate + UTP + H(+) = UDP-N-acetyl-alpha-D-glucosamine + diphosphate</text>
        <dbReference type="Rhea" id="RHEA:13509"/>
        <dbReference type="ChEBI" id="CHEBI:15378"/>
        <dbReference type="ChEBI" id="CHEBI:33019"/>
        <dbReference type="ChEBI" id="CHEBI:46398"/>
        <dbReference type="ChEBI" id="CHEBI:57705"/>
        <dbReference type="ChEBI" id="CHEBI:57776"/>
        <dbReference type="EC" id="2.7.7.23"/>
    </reaction>
</comment>
<comment type="cofactor">
    <cofactor evidence="1">
        <name>Mg(2+)</name>
        <dbReference type="ChEBI" id="CHEBI:18420"/>
    </cofactor>
    <text evidence="1">Binds 1 Mg(2+) ion per subunit.</text>
</comment>
<comment type="pathway">
    <text evidence="1">Nucleotide-sugar biosynthesis; UDP-N-acetyl-alpha-D-glucosamine biosynthesis; N-acetyl-alpha-D-glucosamine 1-phosphate from alpha-D-glucosamine 6-phosphate (route II): step 2/2.</text>
</comment>
<comment type="pathway">
    <text evidence="1">Nucleotide-sugar biosynthesis; UDP-N-acetyl-alpha-D-glucosamine biosynthesis; UDP-N-acetyl-alpha-D-glucosamine from N-acetyl-alpha-D-glucosamine 1-phosphate: step 1/1.</text>
</comment>
<comment type="pathway">
    <text evidence="1">Bacterial outer membrane biogenesis; LPS lipid A biosynthesis.</text>
</comment>
<comment type="subunit">
    <text evidence="1">Homotrimer.</text>
</comment>
<comment type="subcellular location">
    <subcellularLocation>
        <location evidence="1">Cytoplasm</location>
    </subcellularLocation>
</comment>
<comment type="similarity">
    <text evidence="1">In the N-terminal section; belongs to the N-acetylglucosamine-1-phosphate uridyltransferase family.</text>
</comment>
<comment type="similarity">
    <text evidence="1">In the C-terminal section; belongs to the transferase hexapeptide repeat family.</text>
</comment>
<organism>
    <name type="scientific">Blochmanniella pennsylvanica (strain BPEN)</name>
    <dbReference type="NCBI Taxonomy" id="291272"/>
    <lineage>
        <taxon>Bacteria</taxon>
        <taxon>Pseudomonadati</taxon>
        <taxon>Pseudomonadota</taxon>
        <taxon>Gammaproteobacteria</taxon>
        <taxon>Enterobacterales</taxon>
        <taxon>Enterobacteriaceae</taxon>
        <taxon>ant endosymbionts</taxon>
        <taxon>Candidatus Blochmanniella</taxon>
    </lineage>
</organism>
<protein>
    <recommendedName>
        <fullName evidence="1">Bifunctional protein GlmU</fullName>
    </recommendedName>
    <domain>
        <recommendedName>
            <fullName evidence="1">UDP-N-acetylglucosamine pyrophosphorylase</fullName>
            <ecNumber evidence="1">2.7.7.23</ecNumber>
        </recommendedName>
        <alternativeName>
            <fullName evidence="1">N-acetylglucosamine-1-phosphate uridyltransferase</fullName>
        </alternativeName>
    </domain>
    <domain>
        <recommendedName>
            <fullName evidence="1">Glucosamine-1-phosphate N-acetyltransferase</fullName>
            <ecNumber evidence="1">2.3.1.157</ecNumber>
        </recommendedName>
    </domain>
</protein>
<name>GLMU_BLOPB</name>
<gene>
    <name evidence="1" type="primary">glmU</name>
    <name type="ordered locus">BPEN_010</name>
</gene>
<dbReference type="EC" id="2.7.7.23" evidence="1"/>
<dbReference type="EC" id="2.3.1.157" evidence="1"/>
<dbReference type="EMBL" id="CP000016">
    <property type="protein sequence ID" value="AAZ40660.1"/>
    <property type="molecule type" value="Genomic_DNA"/>
</dbReference>
<dbReference type="RefSeq" id="WP_011282566.1">
    <property type="nucleotide sequence ID" value="NC_007292.1"/>
</dbReference>
<dbReference type="SMR" id="Q494C1"/>
<dbReference type="STRING" id="291272.BPEN_010"/>
<dbReference type="KEGG" id="bpn:BPEN_010"/>
<dbReference type="eggNOG" id="COG1207">
    <property type="taxonomic scope" value="Bacteria"/>
</dbReference>
<dbReference type="HOGENOM" id="CLU_029499_15_2_6"/>
<dbReference type="OrthoDB" id="9775031at2"/>
<dbReference type="UniPathway" id="UPA00113">
    <property type="reaction ID" value="UER00532"/>
</dbReference>
<dbReference type="UniPathway" id="UPA00113">
    <property type="reaction ID" value="UER00533"/>
</dbReference>
<dbReference type="UniPathway" id="UPA00973"/>
<dbReference type="Proteomes" id="UP000007794">
    <property type="component" value="Chromosome"/>
</dbReference>
<dbReference type="GO" id="GO:0005737">
    <property type="term" value="C:cytoplasm"/>
    <property type="evidence" value="ECO:0007669"/>
    <property type="project" value="UniProtKB-SubCell"/>
</dbReference>
<dbReference type="GO" id="GO:0016020">
    <property type="term" value="C:membrane"/>
    <property type="evidence" value="ECO:0007669"/>
    <property type="project" value="GOC"/>
</dbReference>
<dbReference type="GO" id="GO:0019134">
    <property type="term" value="F:glucosamine-1-phosphate N-acetyltransferase activity"/>
    <property type="evidence" value="ECO:0007669"/>
    <property type="project" value="UniProtKB-UniRule"/>
</dbReference>
<dbReference type="GO" id="GO:0000287">
    <property type="term" value="F:magnesium ion binding"/>
    <property type="evidence" value="ECO:0007669"/>
    <property type="project" value="UniProtKB-UniRule"/>
</dbReference>
<dbReference type="GO" id="GO:0003977">
    <property type="term" value="F:UDP-N-acetylglucosamine diphosphorylase activity"/>
    <property type="evidence" value="ECO:0007669"/>
    <property type="project" value="UniProtKB-UniRule"/>
</dbReference>
<dbReference type="GO" id="GO:0000902">
    <property type="term" value="P:cell morphogenesis"/>
    <property type="evidence" value="ECO:0007669"/>
    <property type="project" value="UniProtKB-UniRule"/>
</dbReference>
<dbReference type="GO" id="GO:0071555">
    <property type="term" value="P:cell wall organization"/>
    <property type="evidence" value="ECO:0007669"/>
    <property type="project" value="UniProtKB-KW"/>
</dbReference>
<dbReference type="GO" id="GO:0009245">
    <property type="term" value="P:lipid A biosynthetic process"/>
    <property type="evidence" value="ECO:0007669"/>
    <property type="project" value="UniProtKB-UniRule"/>
</dbReference>
<dbReference type="GO" id="GO:0009252">
    <property type="term" value="P:peptidoglycan biosynthetic process"/>
    <property type="evidence" value="ECO:0007669"/>
    <property type="project" value="UniProtKB-UniRule"/>
</dbReference>
<dbReference type="GO" id="GO:0008360">
    <property type="term" value="P:regulation of cell shape"/>
    <property type="evidence" value="ECO:0007669"/>
    <property type="project" value="UniProtKB-KW"/>
</dbReference>
<dbReference type="GO" id="GO:0006048">
    <property type="term" value="P:UDP-N-acetylglucosamine biosynthetic process"/>
    <property type="evidence" value="ECO:0007669"/>
    <property type="project" value="UniProtKB-UniPathway"/>
</dbReference>
<dbReference type="CDD" id="cd02540">
    <property type="entry name" value="GT2_GlmU_N_bac"/>
    <property type="match status" value="1"/>
</dbReference>
<dbReference type="CDD" id="cd03353">
    <property type="entry name" value="LbH_GlmU_C"/>
    <property type="match status" value="1"/>
</dbReference>
<dbReference type="Gene3D" id="2.160.10.10">
    <property type="entry name" value="Hexapeptide repeat proteins"/>
    <property type="match status" value="1"/>
</dbReference>
<dbReference type="Gene3D" id="3.90.550.10">
    <property type="entry name" value="Spore Coat Polysaccharide Biosynthesis Protein SpsA, Chain A"/>
    <property type="match status" value="1"/>
</dbReference>
<dbReference type="HAMAP" id="MF_01631">
    <property type="entry name" value="GlmU"/>
    <property type="match status" value="1"/>
</dbReference>
<dbReference type="InterPro" id="IPR005882">
    <property type="entry name" value="Bifunctional_GlmU"/>
</dbReference>
<dbReference type="InterPro" id="IPR050065">
    <property type="entry name" value="GlmU-like"/>
</dbReference>
<dbReference type="InterPro" id="IPR038009">
    <property type="entry name" value="GlmU_C_LbH"/>
</dbReference>
<dbReference type="InterPro" id="IPR001451">
    <property type="entry name" value="Hexapep"/>
</dbReference>
<dbReference type="InterPro" id="IPR018357">
    <property type="entry name" value="Hexapep_transf_CS"/>
</dbReference>
<dbReference type="InterPro" id="IPR025877">
    <property type="entry name" value="MobA-like_NTP_Trfase"/>
</dbReference>
<dbReference type="InterPro" id="IPR029044">
    <property type="entry name" value="Nucleotide-diphossugar_trans"/>
</dbReference>
<dbReference type="InterPro" id="IPR011004">
    <property type="entry name" value="Trimer_LpxA-like_sf"/>
</dbReference>
<dbReference type="NCBIfam" id="TIGR01173">
    <property type="entry name" value="glmU"/>
    <property type="match status" value="1"/>
</dbReference>
<dbReference type="PANTHER" id="PTHR43584:SF3">
    <property type="entry name" value="BIFUNCTIONAL PROTEIN GLMU"/>
    <property type="match status" value="1"/>
</dbReference>
<dbReference type="PANTHER" id="PTHR43584">
    <property type="entry name" value="NUCLEOTIDYL TRANSFERASE"/>
    <property type="match status" value="1"/>
</dbReference>
<dbReference type="Pfam" id="PF00132">
    <property type="entry name" value="Hexapep"/>
    <property type="match status" value="1"/>
</dbReference>
<dbReference type="Pfam" id="PF12804">
    <property type="entry name" value="NTP_transf_3"/>
    <property type="match status" value="1"/>
</dbReference>
<dbReference type="SUPFAM" id="SSF53448">
    <property type="entry name" value="Nucleotide-diphospho-sugar transferases"/>
    <property type="match status" value="1"/>
</dbReference>
<dbReference type="SUPFAM" id="SSF51161">
    <property type="entry name" value="Trimeric LpxA-like enzymes"/>
    <property type="match status" value="1"/>
</dbReference>
<dbReference type="PROSITE" id="PS00101">
    <property type="entry name" value="HEXAPEP_TRANSFERASES"/>
    <property type="match status" value="1"/>
</dbReference>
<feature type="chain" id="PRO_0000233739" description="Bifunctional protein GlmU">
    <location>
        <begin position="1"/>
        <end position="462"/>
    </location>
</feature>
<feature type="region of interest" description="Pyrophosphorylase" evidence="1">
    <location>
        <begin position="1"/>
        <end position="235"/>
    </location>
</feature>
<feature type="region of interest" description="Linker" evidence="1">
    <location>
        <begin position="236"/>
        <end position="256"/>
    </location>
</feature>
<feature type="region of interest" description="N-acetyltransferase" evidence="1">
    <location>
        <begin position="257"/>
        <end position="462"/>
    </location>
</feature>
<feature type="active site" description="Proton acceptor" evidence="1">
    <location>
        <position position="369"/>
    </location>
</feature>
<feature type="binding site" evidence="1">
    <location>
        <begin position="11"/>
        <end position="14"/>
    </location>
    <ligand>
        <name>UDP-N-acetyl-alpha-D-glucosamine</name>
        <dbReference type="ChEBI" id="CHEBI:57705"/>
    </ligand>
</feature>
<feature type="binding site" evidence="1">
    <location>
        <position position="25"/>
    </location>
    <ligand>
        <name>UDP-N-acetyl-alpha-D-glucosamine</name>
        <dbReference type="ChEBI" id="CHEBI:57705"/>
    </ligand>
</feature>
<feature type="binding site" evidence="1">
    <location>
        <position position="80"/>
    </location>
    <ligand>
        <name>UDP-N-acetyl-alpha-D-glucosamine</name>
        <dbReference type="ChEBI" id="CHEBI:57705"/>
    </ligand>
</feature>
<feature type="binding site" evidence="1">
    <location>
        <begin position="85"/>
        <end position="86"/>
    </location>
    <ligand>
        <name>UDP-N-acetyl-alpha-D-glucosamine</name>
        <dbReference type="ChEBI" id="CHEBI:57705"/>
    </ligand>
</feature>
<feature type="binding site" evidence="1">
    <location>
        <begin position="107"/>
        <end position="109"/>
    </location>
    <ligand>
        <name>UDP-N-acetyl-alpha-D-glucosamine</name>
        <dbReference type="ChEBI" id="CHEBI:57705"/>
    </ligand>
</feature>
<feature type="binding site" evidence="1">
    <location>
        <position position="109"/>
    </location>
    <ligand>
        <name>Mg(2+)</name>
        <dbReference type="ChEBI" id="CHEBI:18420"/>
    </ligand>
</feature>
<feature type="binding site" evidence="1">
    <location>
        <position position="144"/>
    </location>
    <ligand>
        <name>UDP-N-acetyl-alpha-D-glucosamine</name>
        <dbReference type="ChEBI" id="CHEBI:57705"/>
    </ligand>
</feature>
<feature type="binding site" evidence="1">
    <location>
        <position position="159"/>
    </location>
    <ligand>
        <name>UDP-N-acetyl-alpha-D-glucosamine</name>
        <dbReference type="ChEBI" id="CHEBI:57705"/>
    </ligand>
</feature>
<feature type="binding site" evidence="1">
    <location>
        <position position="233"/>
    </location>
    <ligand>
        <name>Mg(2+)</name>
        <dbReference type="ChEBI" id="CHEBI:18420"/>
    </ligand>
</feature>
<feature type="binding site" evidence="1">
    <location>
        <position position="233"/>
    </location>
    <ligand>
        <name>UDP-N-acetyl-alpha-D-glucosamine</name>
        <dbReference type="ChEBI" id="CHEBI:57705"/>
    </ligand>
</feature>
<feature type="binding site" evidence="1">
    <location>
        <position position="339"/>
    </location>
    <ligand>
        <name>UDP-N-acetyl-alpha-D-glucosamine</name>
        <dbReference type="ChEBI" id="CHEBI:57705"/>
    </ligand>
</feature>
<feature type="binding site" evidence="1">
    <location>
        <position position="357"/>
    </location>
    <ligand>
        <name>UDP-N-acetyl-alpha-D-glucosamine</name>
        <dbReference type="ChEBI" id="CHEBI:57705"/>
    </ligand>
</feature>
<feature type="binding site" evidence="1">
    <location>
        <position position="372"/>
    </location>
    <ligand>
        <name>UDP-N-acetyl-alpha-D-glucosamine</name>
        <dbReference type="ChEBI" id="CHEBI:57705"/>
    </ligand>
</feature>
<feature type="binding site" evidence="1">
    <location>
        <position position="383"/>
    </location>
    <ligand>
        <name>UDP-N-acetyl-alpha-D-glucosamine</name>
        <dbReference type="ChEBI" id="CHEBI:57705"/>
    </ligand>
</feature>
<feature type="binding site" evidence="1">
    <location>
        <position position="386"/>
    </location>
    <ligand>
        <name>acetyl-CoA</name>
        <dbReference type="ChEBI" id="CHEBI:57288"/>
    </ligand>
</feature>
<feature type="binding site" evidence="1">
    <location>
        <begin position="392"/>
        <end position="393"/>
    </location>
    <ligand>
        <name>acetyl-CoA</name>
        <dbReference type="ChEBI" id="CHEBI:57288"/>
    </ligand>
</feature>
<feature type="binding site" evidence="1">
    <location>
        <position position="429"/>
    </location>
    <ligand>
        <name>acetyl-CoA</name>
        <dbReference type="ChEBI" id="CHEBI:57288"/>
    </ligand>
</feature>
<feature type="binding site" evidence="1">
    <location>
        <position position="446"/>
    </location>
    <ligand>
        <name>acetyl-CoA</name>
        <dbReference type="ChEBI" id="CHEBI:57288"/>
    </ligand>
</feature>
<accession>Q494C1</accession>
<keyword id="KW-0012">Acyltransferase</keyword>
<keyword id="KW-0133">Cell shape</keyword>
<keyword id="KW-0961">Cell wall biogenesis/degradation</keyword>
<keyword id="KW-0963">Cytoplasm</keyword>
<keyword id="KW-0460">Magnesium</keyword>
<keyword id="KW-0479">Metal-binding</keyword>
<keyword id="KW-0511">Multifunctional enzyme</keyword>
<keyword id="KW-0548">Nucleotidyltransferase</keyword>
<keyword id="KW-0573">Peptidoglycan synthesis</keyword>
<keyword id="KW-1185">Reference proteome</keyword>
<keyword id="KW-0677">Repeat</keyword>
<keyword id="KW-0808">Transferase</keyword>
<evidence type="ECO:0000255" key="1">
    <source>
        <dbReference type="HAMAP-Rule" id="MF_01631"/>
    </source>
</evidence>
<proteinExistence type="inferred from homology"/>
<sequence length="462" mass="51550">MSYINFSAIILAAGRGNRMLSDTPKVLYQIGGKFMLQHLIDSVMQVGVSSIYVVHGYKGEMIIKEINTNQYKIPVYWILQHDLTGTGDAVQRVLPFISDDEEVLVLYGDVPFVSYKTLQRLHVIKSQCDISMLTATLPNPKGYGRIVRNQEGSVVSIIEHDDIINDDQKKIKEVSTGIFIAISNHLKCWLSTLTTHKSKNEFYLTDIIQIAHQSGYSIHTMCPDDTFEIMGVNSKSDFVDLDKQYQQRKVQCLLSSGLMIIDPNRFDLRGTLVHGKDVYIDINVIIEGHVSLGNRVKIGASCILKDTIVADDVEIYPFSIIENTTIGFQSKVGPFVRLRPGTELKEKSHVGNFVEIKNTRLGEQSKVKHLSYLGDAEIGNQVNIGAGTIICNYDGMMKHQTIIGDDVFIGADSQLVAPITIGKNVTIGAGTTVTRDVAANETIISRIRQFSILNWKRLKNKK</sequence>